<keyword id="KW-0067">ATP-binding</keyword>
<keyword id="KW-0963">Cytoplasm</keyword>
<keyword id="KW-0315">Glutamine amidotransferase</keyword>
<keyword id="KW-0436">Ligase</keyword>
<keyword id="KW-0460">Magnesium</keyword>
<keyword id="KW-0479">Metal-binding</keyword>
<keyword id="KW-0547">Nucleotide-binding</keyword>
<keyword id="KW-0658">Purine biosynthesis</keyword>
<reference key="1">
    <citation type="submission" date="2006-08" db="EMBL/GenBank/DDBJ databases">
        <title>Complete sequence of chromosome 1 of Shewanella sp. MR-7.</title>
        <authorList>
            <person name="Copeland A."/>
            <person name="Lucas S."/>
            <person name="Lapidus A."/>
            <person name="Barry K."/>
            <person name="Detter J.C."/>
            <person name="Glavina del Rio T."/>
            <person name="Hammon N."/>
            <person name="Israni S."/>
            <person name="Dalin E."/>
            <person name="Tice H."/>
            <person name="Pitluck S."/>
            <person name="Kiss H."/>
            <person name="Brettin T."/>
            <person name="Bruce D."/>
            <person name="Han C."/>
            <person name="Tapia R."/>
            <person name="Gilna P."/>
            <person name="Schmutz J."/>
            <person name="Larimer F."/>
            <person name="Land M."/>
            <person name="Hauser L."/>
            <person name="Kyrpides N."/>
            <person name="Mikhailova N."/>
            <person name="Nealson K."/>
            <person name="Konstantinidis K."/>
            <person name="Klappenbach J."/>
            <person name="Tiedje J."/>
            <person name="Richardson P."/>
        </authorList>
    </citation>
    <scope>NUCLEOTIDE SEQUENCE [LARGE SCALE GENOMIC DNA]</scope>
    <source>
        <strain>MR-7</strain>
    </source>
</reference>
<evidence type="ECO:0000255" key="1">
    <source>
        <dbReference type="HAMAP-Rule" id="MF_00419"/>
    </source>
</evidence>
<evidence type="ECO:0000256" key="2">
    <source>
        <dbReference type="SAM" id="MobiDB-lite"/>
    </source>
</evidence>
<protein>
    <recommendedName>
        <fullName evidence="1">Phosphoribosylformylglycinamidine synthase</fullName>
        <shortName evidence="1">FGAM synthase</shortName>
        <shortName evidence="1">FGAMS</shortName>
        <ecNumber evidence="1">6.3.5.3</ecNumber>
    </recommendedName>
    <alternativeName>
        <fullName evidence="1">Formylglycinamide ribonucleotide amidotransferase</fullName>
        <shortName evidence="1">FGAR amidotransferase</shortName>
        <shortName evidence="1">FGAR-AT</shortName>
    </alternativeName>
</protein>
<gene>
    <name evidence="1" type="primary">purL</name>
    <name type="ordered locus">Shewmr7_1309</name>
</gene>
<comment type="function">
    <text evidence="1">Phosphoribosylformylglycinamidine synthase involved in the purines biosynthetic pathway. Catalyzes the ATP-dependent conversion of formylglycinamide ribonucleotide (FGAR) and glutamine to yield formylglycinamidine ribonucleotide (FGAM) and glutamate.</text>
</comment>
<comment type="catalytic activity">
    <reaction evidence="1">
        <text>N(2)-formyl-N(1)-(5-phospho-beta-D-ribosyl)glycinamide + L-glutamine + ATP + H2O = 2-formamido-N(1)-(5-O-phospho-beta-D-ribosyl)acetamidine + L-glutamate + ADP + phosphate + H(+)</text>
        <dbReference type="Rhea" id="RHEA:17129"/>
        <dbReference type="ChEBI" id="CHEBI:15377"/>
        <dbReference type="ChEBI" id="CHEBI:15378"/>
        <dbReference type="ChEBI" id="CHEBI:29985"/>
        <dbReference type="ChEBI" id="CHEBI:30616"/>
        <dbReference type="ChEBI" id="CHEBI:43474"/>
        <dbReference type="ChEBI" id="CHEBI:58359"/>
        <dbReference type="ChEBI" id="CHEBI:147286"/>
        <dbReference type="ChEBI" id="CHEBI:147287"/>
        <dbReference type="ChEBI" id="CHEBI:456216"/>
        <dbReference type="EC" id="6.3.5.3"/>
    </reaction>
</comment>
<comment type="pathway">
    <text evidence="1">Purine metabolism; IMP biosynthesis via de novo pathway; 5-amino-1-(5-phospho-D-ribosyl)imidazole from N(2)-formyl-N(1)-(5-phospho-D-ribosyl)glycinamide: step 1/2.</text>
</comment>
<comment type="subunit">
    <text evidence="1">Monomer.</text>
</comment>
<comment type="subcellular location">
    <subcellularLocation>
        <location evidence="1">Cytoplasm</location>
    </subcellularLocation>
</comment>
<comment type="similarity">
    <text evidence="1">In the N-terminal section; belongs to the FGAMS family.</text>
</comment>
<name>PUR4_SHESR</name>
<proteinExistence type="inferred from homology"/>
<organism>
    <name type="scientific">Shewanella sp. (strain MR-7)</name>
    <dbReference type="NCBI Taxonomy" id="60481"/>
    <lineage>
        <taxon>Bacteria</taxon>
        <taxon>Pseudomonadati</taxon>
        <taxon>Pseudomonadota</taxon>
        <taxon>Gammaproteobacteria</taxon>
        <taxon>Alteromonadales</taxon>
        <taxon>Shewanellaceae</taxon>
        <taxon>Shewanella</taxon>
    </lineage>
</organism>
<feature type="chain" id="PRO_0000264596" description="Phosphoribosylformylglycinamidine synthase">
    <location>
        <begin position="1"/>
        <end position="1293"/>
    </location>
</feature>
<feature type="domain" description="Glutamine amidotransferase type-1" evidence="1">
    <location>
        <begin position="1040"/>
        <end position="1293"/>
    </location>
</feature>
<feature type="region of interest" description="Disordered" evidence="2">
    <location>
        <begin position="305"/>
        <end position="328"/>
    </location>
</feature>
<feature type="active site" description="Nucleophile" evidence="1">
    <location>
        <position position="1133"/>
    </location>
</feature>
<feature type="active site" evidence="1">
    <location>
        <position position="1258"/>
    </location>
</feature>
<feature type="active site" evidence="1">
    <location>
        <position position="1260"/>
    </location>
</feature>
<feature type="binding site" evidence="1">
    <location>
        <begin position="305"/>
        <end position="316"/>
    </location>
    <ligand>
        <name>ATP</name>
        <dbReference type="ChEBI" id="CHEBI:30616"/>
    </ligand>
</feature>
<feature type="binding site" evidence="1">
    <location>
        <position position="676"/>
    </location>
    <ligand>
        <name>ATP</name>
        <dbReference type="ChEBI" id="CHEBI:30616"/>
    </ligand>
</feature>
<feature type="binding site" evidence="1">
    <location>
        <position position="677"/>
    </location>
    <ligand>
        <name>Mg(2+)</name>
        <dbReference type="ChEBI" id="CHEBI:18420"/>
    </ligand>
</feature>
<feature type="binding site" evidence="1">
    <location>
        <position position="716"/>
    </location>
    <ligand>
        <name>Mg(2+)</name>
        <dbReference type="ChEBI" id="CHEBI:18420"/>
    </ligand>
</feature>
<feature type="binding site" evidence="1">
    <location>
        <position position="720"/>
    </location>
    <ligand>
        <name>Mg(2+)</name>
        <dbReference type="ChEBI" id="CHEBI:18420"/>
    </ligand>
</feature>
<feature type="binding site" evidence="1">
    <location>
        <position position="884"/>
    </location>
    <ligand>
        <name>Mg(2+)</name>
        <dbReference type="ChEBI" id="CHEBI:18420"/>
    </ligand>
</feature>
<feature type="binding site" evidence="1">
    <location>
        <position position="886"/>
    </location>
    <ligand>
        <name>ATP</name>
        <dbReference type="ChEBI" id="CHEBI:30616"/>
    </ligand>
</feature>
<dbReference type="EC" id="6.3.5.3" evidence="1"/>
<dbReference type="EMBL" id="CP000444">
    <property type="protein sequence ID" value="ABI42308.1"/>
    <property type="molecule type" value="Genomic_DNA"/>
</dbReference>
<dbReference type="SMR" id="Q0HX47"/>
<dbReference type="MEROPS" id="C56.972"/>
<dbReference type="KEGG" id="shm:Shewmr7_1309"/>
<dbReference type="HOGENOM" id="CLU_001031_0_2_6"/>
<dbReference type="UniPathway" id="UPA00074">
    <property type="reaction ID" value="UER00128"/>
</dbReference>
<dbReference type="GO" id="GO:0005737">
    <property type="term" value="C:cytoplasm"/>
    <property type="evidence" value="ECO:0007669"/>
    <property type="project" value="UniProtKB-SubCell"/>
</dbReference>
<dbReference type="GO" id="GO:0005524">
    <property type="term" value="F:ATP binding"/>
    <property type="evidence" value="ECO:0007669"/>
    <property type="project" value="UniProtKB-UniRule"/>
</dbReference>
<dbReference type="GO" id="GO:0046872">
    <property type="term" value="F:metal ion binding"/>
    <property type="evidence" value="ECO:0007669"/>
    <property type="project" value="UniProtKB-KW"/>
</dbReference>
<dbReference type="GO" id="GO:0004642">
    <property type="term" value="F:phosphoribosylformylglycinamidine synthase activity"/>
    <property type="evidence" value="ECO:0007669"/>
    <property type="project" value="UniProtKB-UniRule"/>
</dbReference>
<dbReference type="GO" id="GO:0006189">
    <property type="term" value="P:'de novo' IMP biosynthetic process"/>
    <property type="evidence" value="ECO:0007669"/>
    <property type="project" value="UniProtKB-UniRule"/>
</dbReference>
<dbReference type="CDD" id="cd01740">
    <property type="entry name" value="GATase1_FGAR_AT"/>
    <property type="match status" value="1"/>
</dbReference>
<dbReference type="CDD" id="cd02203">
    <property type="entry name" value="PurL_repeat1"/>
    <property type="match status" value="1"/>
</dbReference>
<dbReference type="CDD" id="cd02204">
    <property type="entry name" value="PurL_repeat2"/>
    <property type="match status" value="1"/>
</dbReference>
<dbReference type="FunFam" id="1.10.8.750:FF:000002">
    <property type="entry name" value="Phosphoribosylformylglycinamidine synthase"/>
    <property type="match status" value="1"/>
</dbReference>
<dbReference type="FunFam" id="3.30.1330.10:FF:000002">
    <property type="entry name" value="Phosphoribosylformylglycinamidine synthase"/>
    <property type="match status" value="1"/>
</dbReference>
<dbReference type="FunFam" id="3.30.1330.10:FF:000005">
    <property type="entry name" value="Phosphoribosylformylglycinamidine synthase"/>
    <property type="match status" value="1"/>
</dbReference>
<dbReference type="FunFam" id="3.40.50.880:FF:000008">
    <property type="entry name" value="Phosphoribosylformylglycinamidine synthase"/>
    <property type="match status" value="1"/>
</dbReference>
<dbReference type="FunFam" id="3.90.650.10:FF:000002">
    <property type="entry name" value="Phosphoribosylformylglycinamidine synthase"/>
    <property type="match status" value="1"/>
</dbReference>
<dbReference type="FunFam" id="3.90.650.10:FF:000005">
    <property type="entry name" value="Phosphoribosylformylglycinamidine synthase"/>
    <property type="match status" value="1"/>
</dbReference>
<dbReference type="Gene3D" id="3.40.50.880">
    <property type="match status" value="1"/>
</dbReference>
<dbReference type="Gene3D" id="1.10.8.750">
    <property type="entry name" value="Phosphoribosylformylglycinamidine synthase, linker domain"/>
    <property type="match status" value="1"/>
</dbReference>
<dbReference type="Gene3D" id="3.90.650.10">
    <property type="entry name" value="PurM-like C-terminal domain"/>
    <property type="match status" value="2"/>
</dbReference>
<dbReference type="Gene3D" id="3.30.1330.10">
    <property type="entry name" value="PurM-like, N-terminal domain"/>
    <property type="match status" value="2"/>
</dbReference>
<dbReference type="HAMAP" id="MF_00419">
    <property type="entry name" value="PurL_1"/>
    <property type="match status" value="1"/>
</dbReference>
<dbReference type="InterPro" id="IPR029062">
    <property type="entry name" value="Class_I_gatase-like"/>
</dbReference>
<dbReference type="InterPro" id="IPR040707">
    <property type="entry name" value="FGAR-AT_N"/>
</dbReference>
<dbReference type="InterPro" id="IPR055181">
    <property type="entry name" value="FGAR-AT_PurM_N-like"/>
</dbReference>
<dbReference type="InterPro" id="IPR010073">
    <property type="entry name" value="PurL_large"/>
</dbReference>
<dbReference type="InterPro" id="IPR041609">
    <property type="entry name" value="PurL_linker"/>
</dbReference>
<dbReference type="InterPro" id="IPR010918">
    <property type="entry name" value="PurM-like_C_dom"/>
</dbReference>
<dbReference type="InterPro" id="IPR036676">
    <property type="entry name" value="PurM-like_C_sf"/>
</dbReference>
<dbReference type="InterPro" id="IPR036921">
    <property type="entry name" value="PurM-like_N_sf"/>
</dbReference>
<dbReference type="InterPro" id="IPR036604">
    <property type="entry name" value="PurS-like_sf"/>
</dbReference>
<dbReference type="NCBIfam" id="TIGR01735">
    <property type="entry name" value="FGAM_synt"/>
    <property type="match status" value="1"/>
</dbReference>
<dbReference type="NCBIfam" id="NF003672">
    <property type="entry name" value="PRK05297.1"/>
    <property type="match status" value="1"/>
</dbReference>
<dbReference type="PANTHER" id="PTHR10099">
    <property type="entry name" value="PHOSPHORIBOSYLFORMYLGLYCINAMIDINE SYNTHASE"/>
    <property type="match status" value="1"/>
</dbReference>
<dbReference type="PANTHER" id="PTHR10099:SF1">
    <property type="entry name" value="PHOSPHORIBOSYLFORMYLGLYCINAMIDINE SYNTHASE"/>
    <property type="match status" value="1"/>
</dbReference>
<dbReference type="Pfam" id="PF02769">
    <property type="entry name" value="AIRS_C"/>
    <property type="match status" value="2"/>
</dbReference>
<dbReference type="Pfam" id="PF18072">
    <property type="entry name" value="FGAR-AT_linker"/>
    <property type="match status" value="1"/>
</dbReference>
<dbReference type="Pfam" id="PF18076">
    <property type="entry name" value="FGAR-AT_N"/>
    <property type="match status" value="1"/>
</dbReference>
<dbReference type="Pfam" id="PF22689">
    <property type="entry name" value="FGAR-AT_PurM_N-like"/>
    <property type="match status" value="1"/>
</dbReference>
<dbReference type="Pfam" id="PF13507">
    <property type="entry name" value="GATase_5"/>
    <property type="match status" value="1"/>
</dbReference>
<dbReference type="SMART" id="SM01211">
    <property type="entry name" value="GATase_5"/>
    <property type="match status" value="1"/>
</dbReference>
<dbReference type="SUPFAM" id="SSF52317">
    <property type="entry name" value="Class I glutamine amidotransferase-like"/>
    <property type="match status" value="1"/>
</dbReference>
<dbReference type="SUPFAM" id="SSF109736">
    <property type="entry name" value="FGAM synthase PurL, linker domain"/>
    <property type="match status" value="1"/>
</dbReference>
<dbReference type="SUPFAM" id="SSF56042">
    <property type="entry name" value="PurM C-terminal domain-like"/>
    <property type="match status" value="2"/>
</dbReference>
<dbReference type="SUPFAM" id="SSF55326">
    <property type="entry name" value="PurM N-terminal domain-like"/>
    <property type="match status" value="2"/>
</dbReference>
<dbReference type="SUPFAM" id="SSF82697">
    <property type="entry name" value="PurS-like"/>
    <property type="match status" value="1"/>
</dbReference>
<dbReference type="PROSITE" id="PS51273">
    <property type="entry name" value="GATASE_TYPE_1"/>
    <property type="match status" value="1"/>
</dbReference>
<accession>Q0HX47</accession>
<sequence>MEIIRGAPALSTFRVQKLMEACVNAALPVRQIYAEYVHLADLSELLETNEREQLEKILTYGPAIEAHTPQGLLLFVTPRPGTISPWSSKATDIAHNCGLGKVKRLERGVAYYVESDTLTVEQQQTLKGLLHDRMVEVVLDDFAKADVLFKRTEPAPFKSVNVLAEGRRALEVANVEMGLALAEDEIDYLVENFVRLNRNPNDIELMMFAQANSEHCRHKIFNADWTIDGEAQPKSLFKMIKNTFETTPDHVLSAYKDNAAVMEGSVAGRFFPDPNGVYSYHTEPMHVLMKVETHNHPTAISPYPGAATGSGGEIRDEGATGRGSKPKAGLTGFSVSNLKIPGFVQPWEGSYGKPDRIVSALEIMTEGPLGGAAFNNEFGRPALLGYFRTYEQEVSSHNGVEVRGYHKPIMLAGGLGNIREEHVQKGEITVGAKLIVLGGPAMNIGLGGGAASSMASGQSSEDLDFASVQRENPEMERRCQEVIDRCWQLGDKNPIQFIHDVGAGGLSNAFPELVNDGGRGGIFNLRNVPSDEPGMSPLEIWCNESQERYVLSVAAEDLPLFTAICERERAPFAVVGEATQEQHLTLADSHFDNNPIDLPLEVLLGKAPKMSRNVVSAKAVSPALEQSNIDVKEAVKRILSLPTVADKTFLITIGDRTVTGLVNRDQMVGPWQVPVADCAVTAASFDTYAGEAMSMGERTPLALLDFGASARMAVAESIMNIAGADIGSFKRIKLSANWMSAAGHPGEDAGLYEAVKAVGEELCPELSLTIPVGKDSMSMKTAWQQDGANKTVTAPMSLVISAFGVVQDIRNTVTPELRSDKGETSLLLVDLGAGKNRLGGSCLAQVYGELGDIAPDLDDAALLRGFFETMQKLVAKKSVIAYHDRSDGGLFTTLVEMAFAGNTGLAIDLSALQGTDVERLFNEELGGVLQVSRADAELIAAQFAQAGVPCHMIGSLANDQRVTIKDGAREVFSETRVALRTLWSETTYRMQALRDNPACALEEFKLKQDKTDLGLTVNLSFDPSEDVAAPYILKGAAPKMAILREQGVNSHVEMAAAFDRAGFESRDVHMSDILSGRISLEEFQGLVACGGFSYGDVLGAGEGWAKSILFNERARDEFSRFFERDSSFALGVCNGCQMLSNLKEIIPGSEHWPRFVRNRSERFEARFSLVEVQQSPSLFFQGMAGSRMPIAVSHGEGHAEFASAQALALAEASGTIALRFVNGNGEIATQYPQNPNGSPNGLTGICTTDGRVTLMMPHPERVFRTVANSWHPDNWGEDSPWMRMFRNARVNLG</sequence>